<gene>
    <name type="primary">ADA</name>
    <name type="ORF">RCJMB04_9m8</name>
</gene>
<keyword id="KW-0965">Cell junction</keyword>
<keyword id="KW-1003">Cell membrane</keyword>
<keyword id="KW-0963">Cytoplasm</keyword>
<keyword id="KW-0968">Cytoplasmic vesicle</keyword>
<keyword id="KW-0378">Hydrolase</keyword>
<keyword id="KW-0458">Lysosome</keyword>
<keyword id="KW-0472">Membrane</keyword>
<keyword id="KW-0479">Metal-binding</keyword>
<keyword id="KW-0546">Nucleotide metabolism</keyword>
<keyword id="KW-1185">Reference proteome</keyword>
<keyword id="KW-0862">Zinc</keyword>
<proteinExistence type="evidence at transcript level"/>
<reference key="1">
    <citation type="journal article" date="2005" name="Genome Biol.">
        <title>Full-length cDNAs from chicken bursal lymphocytes to facilitate gene function analysis.</title>
        <authorList>
            <person name="Caldwell R.B."/>
            <person name="Kierzek A.M."/>
            <person name="Arakawa H."/>
            <person name="Bezzubov Y."/>
            <person name="Zaim J."/>
            <person name="Fiedler P."/>
            <person name="Kutter S."/>
            <person name="Blagodatski A."/>
            <person name="Kostovska D."/>
            <person name="Koter M."/>
            <person name="Plachy J."/>
            <person name="Carninci P."/>
            <person name="Hayashizaki Y."/>
            <person name="Buerstedde J.-M."/>
        </authorList>
    </citation>
    <scope>NUCLEOTIDE SEQUENCE [LARGE SCALE MRNA]</scope>
    <source>
        <strain>CB</strain>
        <tissue>Bursa of Fabricius</tissue>
    </source>
</reference>
<feature type="chain" id="PRO_0000194355" description="Adenosine deaminase">
    <location>
        <begin position="1"/>
        <end position="357"/>
    </location>
</feature>
<feature type="active site" description="Proton donor" evidence="3">
    <location>
        <position position="215"/>
    </location>
</feature>
<feature type="binding site" evidence="4">
    <location>
        <position position="16"/>
    </location>
    <ligand>
        <name>Zn(2+)</name>
        <dbReference type="ChEBI" id="CHEBI:29105"/>
        <note>catalytic</note>
    </ligand>
</feature>
<feature type="binding site" evidence="4">
    <location>
        <position position="18"/>
    </location>
    <ligand>
        <name>substrate</name>
    </ligand>
</feature>
<feature type="binding site" evidence="4">
    <location>
        <position position="18"/>
    </location>
    <ligand>
        <name>Zn(2+)</name>
        <dbReference type="ChEBI" id="CHEBI:29105"/>
        <note>catalytic</note>
    </ligand>
</feature>
<feature type="binding site" evidence="4">
    <location>
        <position position="20"/>
    </location>
    <ligand>
        <name>substrate</name>
    </ligand>
</feature>
<feature type="binding site" evidence="4">
    <location>
        <position position="185"/>
    </location>
    <ligand>
        <name>substrate</name>
    </ligand>
</feature>
<feature type="binding site" evidence="4">
    <location>
        <position position="212"/>
    </location>
    <ligand>
        <name>Zn(2+)</name>
        <dbReference type="ChEBI" id="CHEBI:29105"/>
        <note>catalytic</note>
    </ligand>
</feature>
<feature type="binding site" evidence="4">
    <location>
        <position position="294"/>
    </location>
    <ligand>
        <name>Zn(2+)</name>
        <dbReference type="ChEBI" id="CHEBI:29105"/>
        <note>catalytic</note>
    </ligand>
</feature>
<feature type="binding site" evidence="4">
    <location>
        <position position="295"/>
    </location>
    <ligand>
        <name>substrate</name>
    </ligand>
</feature>
<feature type="site" description="Important for catalytic activity" evidence="3">
    <location>
        <position position="236"/>
    </location>
</feature>
<protein>
    <recommendedName>
        <fullName>Adenosine deaminase</fullName>
        <ecNumber evidence="2">3.5.4.4</ecNumber>
    </recommendedName>
    <alternativeName>
        <fullName>Adenosine aminohydrolase</fullName>
    </alternativeName>
</protein>
<sequence>MERGVRVFGEPKVELHIHLDGAIRPETILHFGKKRGVPLPGSTVDELMKHVSYQTPLSLKLFLEKFNHYMPAIAGDREAVRRIAYELVETKAKEGVVYVEVRYSPHLLANCRVEPIPWGQAEGDLTPEEVVNLVNQGLQDGERNFRIKARSILCCMRHMPSWSPEVVELCKKYQNNSVVAIDLAGDELLMASSDHKAAYEEAERCGIHRTVHAGEAGPATMIKEAVYLLKAERIGHGYHVLEDPELYRELLRTRMHFEVCPWSSYLTGACLPDFRKHPVVQFKKDQANYSINTDDPLIFNSNIDKDYGIVKEYMDFTEEDFKRVNINAAQSSFLPEKEKQELLNTLYEAYGMVPATS</sequence>
<organism>
    <name type="scientific">Gallus gallus</name>
    <name type="common">Chicken</name>
    <dbReference type="NCBI Taxonomy" id="9031"/>
    <lineage>
        <taxon>Eukaryota</taxon>
        <taxon>Metazoa</taxon>
        <taxon>Chordata</taxon>
        <taxon>Craniata</taxon>
        <taxon>Vertebrata</taxon>
        <taxon>Euteleostomi</taxon>
        <taxon>Archelosauria</taxon>
        <taxon>Archosauria</taxon>
        <taxon>Dinosauria</taxon>
        <taxon>Saurischia</taxon>
        <taxon>Theropoda</taxon>
        <taxon>Coelurosauria</taxon>
        <taxon>Aves</taxon>
        <taxon>Neognathae</taxon>
        <taxon>Galloanserae</taxon>
        <taxon>Galliformes</taxon>
        <taxon>Phasianidae</taxon>
        <taxon>Phasianinae</taxon>
        <taxon>Gallus</taxon>
    </lineage>
</organism>
<comment type="function">
    <text evidence="2">Catalyzes the hydrolytic deamination of adenosine and 2-deoxyadenosine. Plays an important role in purine metabolism and in adenosine homeostasis. Modulates signaling by extracellular adenosine, and so contributes indirectly to cellular signaling events. May act as a positive regulator of T-cell coactivation (By similarity).</text>
</comment>
<comment type="catalytic activity">
    <reaction evidence="2">
        <text>adenosine + H2O + H(+) = inosine + NH4(+)</text>
        <dbReference type="Rhea" id="RHEA:24408"/>
        <dbReference type="ChEBI" id="CHEBI:15377"/>
        <dbReference type="ChEBI" id="CHEBI:15378"/>
        <dbReference type="ChEBI" id="CHEBI:16335"/>
        <dbReference type="ChEBI" id="CHEBI:17596"/>
        <dbReference type="ChEBI" id="CHEBI:28938"/>
        <dbReference type="EC" id="3.5.4.4"/>
    </reaction>
    <physiologicalReaction direction="left-to-right" evidence="2">
        <dbReference type="Rhea" id="RHEA:24409"/>
    </physiologicalReaction>
</comment>
<comment type="catalytic activity">
    <reaction evidence="2">
        <text>2'-deoxyadenosine + H2O + H(+) = 2'-deoxyinosine + NH4(+)</text>
        <dbReference type="Rhea" id="RHEA:28190"/>
        <dbReference type="ChEBI" id="CHEBI:15377"/>
        <dbReference type="ChEBI" id="CHEBI:15378"/>
        <dbReference type="ChEBI" id="CHEBI:17256"/>
        <dbReference type="ChEBI" id="CHEBI:28938"/>
        <dbReference type="ChEBI" id="CHEBI:28997"/>
        <dbReference type="EC" id="3.5.4.4"/>
    </reaction>
    <physiologicalReaction direction="left-to-right" evidence="2">
        <dbReference type="Rhea" id="RHEA:28191"/>
    </physiologicalReaction>
</comment>
<comment type="cofactor">
    <cofactor evidence="3">
        <name>Zn(2+)</name>
        <dbReference type="ChEBI" id="CHEBI:29105"/>
    </cofactor>
    <text evidence="3">Binds 1 zinc ion per subunit.</text>
</comment>
<comment type="subcellular location">
    <subcellularLocation>
        <location evidence="2">Cell membrane</location>
        <topology evidence="1">Peripheral membrane protein</topology>
        <orientation evidence="1">Extracellular side</orientation>
    </subcellularLocation>
    <subcellularLocation>
        <location evidence="2">Cell junction</location>
    </subcellularLocation>
    <subcellularLocation>
        <location evidence="3">Cytoplasmic vesicle lumen</location>
    </subcellularLocation>
    <subcellularLocation>
        <location evidence="1">Cytoplasm</location>
    </subcellularLocation>
    <subcellularLocation>
        <location evidence="2">Lysosome</location>
    </subcellularLocation>
</comment>
<comment type="similarity">
    <text evidence="5">Belongs to the metallo-dependent hydrolases superfamily. Adenosine and AMP deaminases family.</text>
</comment>
<evidence type="ECO:0000250" key="1"/>
<evidence type="ECO:0000250" key="2">
    <source>
        <dbReference type="UniProtKB" id="P00813"/>
    </source>
</evidence>
<evidence type="ECO:0000250" key="3">
    <source>
        <dbReference type="UniProtKB" id="P03958"/>
    </source>
</evidence>
<evidence type="ECO:0000250" key="4">
    <source>
        <dbReference type="UniProtKB" id="P56658"/>
    </source>
</evidence>
<evidence type="ECO:0000305" key="5"/>
<name>ADA_CHICK</name>
<dbReference type="EC" id="3.5.4.4" evidence="2"/>
<dbReference type="EMBL" id="AJ720038">
    <property type="protein sequence ID" value="CAG31697.1"/>
    <property type="molecule type" value="mRNA"/>
</dbReference>
<dbReference type="RefSeq" id="NP_001006290.1">
    <property type="nucleotide sequence ID" value="NM_001006290.2"/>
</dbReference>
<dbReference type="SMR" id="Q5ZKP6"/>
<dbReference type="FunCoup" id="Q5ZKP6">
    <property type="interactions" value="1199"/>
</dbReference>
<dbReference type="STRING" id="9031.ENSGALP00000006620"/>
<dbReference type="PaxDb" id="9031-ENSGALP00000006620"/>
<dbReference type="GeneID" id="419194"/>
<dbReference type="KEGG" id="gga:419194"/>
<dbReference type="CTD" id="100"/>
<dbReference type="VEuPathDB" id="HostDB:geneid_419194"/>
<dbReference type="eggNOG" id="KOG1097">
    <property type="taxonomic scope" value="Eukaryota"/>
</dbReference>
<dbReference type="InParanoid" id="Q5ZKP6"/>
<dbReference type="OrthoDB" id="272271at2759"/>
<dbReference type="PhylomeDB" id="Q5ZKP6"/>
<dbReference type="BRENDA" id="3.5.4.4">
    <property type="organism ID" value="1306"/>
</dbReference>
<dbReference type="PRO" id="PR:Q5ZKP6"/>
<dbReference type="Proteomes" id="UP000000539">
    <property type="component" value="Unassembled WGS sequence"/>
</dbReference>
<dbReference type="GO" id="GO:0070161">
    <property type="term" value="C:anchoring junction"/>
    <property type="evidence" value="ECO:0007669"/>
    <property type="project" value="UniProtKB-SubCell"/>
</dbReference>
<dbReference type="GO" id="GO:0060205">
    <property type="term" value="C:cytoplasmic vesicle lumen"/>
    <property type="evidence" value="ECO:0007669"/>
    <property type="project" value="UniProtKB-SubCell"/>
</dbReference>
<dbReference type="GO" id="GO:0005829">
    <property type="term" value="C:cytosol"/>
    <property type="evidence" value="ECO:0000318"/>
    <property type="project" value="GO_Central"/>
</dbReference>
<dbReference type="GO" id="GO:0009897">
    <property type="term" value="C:external side of plasma membrane"/>
    <property type="evidence" value="ECO:0000318"/>
    <property type="project" value="GO_Central"/>
</dbReference>
<dbReference type="GO" id="GO:0005764">
    <property type="term" value="C:lysosome"/>
    <property type="evidence" value="ECO:0007669"/>
    <property type="project" value="UniProtKB-SubCell"/>
</dbReference>
<dbReference type="GO" id="GO:0046936">
    <property type="term" value="F:2'-deoxyadenosine deaminase activity"/>
    <property type="evidence" value="ECO:0007669"/>
    <property type="project" value="RHEA"/>
</dbReference>
<dbReference type="GO" id="GO:0004000">
    <property type="term" value="F:adenosine deaminase activity"/>
    <property type="evidence" value="ECO:0000250"/>
    <property type="project" value="UniProtKB"/>
</dbReference>
<dbReference type="GO" id="GO:0008270">
    <property type="term" value="F:zinc ion binding"/>
    <property type="evidence" value="ECO:0000250"/>
    <property type="project" value="UniProtKB"/>
</dbReference>
<dbReference type="GO" id="GO:0006154">
    <property type="term" value="P:adenosine catabolic process"/>
    <property type="evidence" value="ECO:0000250"/>
    <property type="project" value="UniProtKB"/>
</dbReference>
<dbReference type="GO" id="GO:0043103">
    <property type="term" value="P:hypoxanthine salvage"/>
    <property type="evidence" value="ECO:0000318"/>
    <property type="project" value="GO_Central"/>
</dbReference>
<dbReference type="GO" id="GO:0046103">
    <property type="term" value="P:inosine biosynthetic process"/>
    <property type="evidence" value="ECO:0000250"/>
    <property type="project" value="UniProtKB"/>
</dbReference>
<dbReference type="GO" id="GO:0060169">
    <property type="term" value="P:negative regulation of adenosine receptor signaling pathway"/>
    <property type="evidence" value="ECO:0000318"/>
    <property type="project" value="GO_Central"/>
</dbReference>
<dbReference type="GO" id="GO:0009117">
    <property type="term" value="P:nucleotide metabolic process"/>
    <property type="evidence" value="ECO:0007669"/>
    <property type="project" value="UniProtKB-KW"/>
</dbReference>
<dbReference type="GO" id="GO:0009168">
    <property type="term" value="P:purine ribonucleoside monophosphate biosynthetic process"/>
    <property type="evidence" value="ECO:0007669"/>
    <property type="project" value="InterPro"/>
</dbReference>
<dbReference type="GO" id="GO:0042110">
    <property type="term" value="P:T cell activation"/>
    <property type="evidence" value="ECO:0000318"/>
    <property type="project" value="GO_Central"/>
</dbReference>
<dbReference type="CDD" id="cd01320">
    <property type="entry name" value="ADA"/>
    <property type="match status" value="1"/>
</dbReference>
<dbReference type="FunFam" id="3.20.20.140:FF:000038">
    <property type="entry name" value="Adenosine deaminase"/>
    <property type="match status" value="1"/>
</dbReference>
<dbReference type="Gene3D" id="3.20.20.140">
    <property type="entry name" value="Metal-dependent hydrolases"/>
    <property type="match status" value="1"/>
</dbReference>
<dbReference type="HAMAP" id="MF_00540">
    <property type="entry name" value="A_deaminase"/>
    <property type="match status" value="1"/>
</dbReference>
<dbReference type="InterPro" id="IPR006650">
    <property type="entry name" value="A/AMP_deam_AS"/>
</dbReference>
<dbReference type="InterPro" id="IPR028893">
    <property type="entry name" value="A_deaminase"/>
</dbReference>
<dbReference type="InterPro" id="IPR001365">
    <property type="entry name" value="A_deaminase_dom"/>
</dbReference>
<dbReference type="InterPro" id="IPR006330">
    <property type="entry name" value="Ado/ade_deaminase"/>
</dbReference>
<dbReference type="InterPro" id="IPR032466">
    <property type="entry name" value="Metal_Hydrolase"/>
</dbReference>
<dbReference type="NCBIfam" id="TIGR01430">
    <property type="entry name" value="aden_deam"/>
    <property type="match status" value="1"/>
</dbReference>
<dbReference type="PANTHER" id="PTHR11409">
    <property type="entry name" value="ADENOSINE DEAMINASE"/>
    <property type="match status" value="1"/>
</dbReference>
<dbReference type="PANTHER" id="PTHR11409:SF43">
    <property type="entry name" value="ADENOSINE DEAMINASE"/>
    <property type="match status" value="1"/>
</dbReference>
<dbReference type="Pfam" id="PF00962">
    <property type="entry name" value="A_deaminase"/>
    <property type="match status" value="1"/>
</dbReference>
<dbReference type="SUPFAM" id="SSF51556">
    <property type="entry name" value="Metallo-dependent hydrolases"/>
    <property type="match status" value="1"/>
</dbReference>
<dbReference type="PROSITE" id="PS00485">
    <property type="entry name" value="A_DEAMINASE"/>
    <property type="match status" value="1"/>
</dbReference>
<accession>Q5ZKP6</accession>